<accession>P59488</accession>
<comment type="function">
    <text evidence="1">Catalyzes the specific phosphorylation of the 3-hydroxyl group of shikimic acid using ATP as a cosubstrate.</text>
</comment>
<comment type="catalytic activity">
    <reaction evidence="1">
        <text>shikimate + ATP = 3-phosphoshikimate + ADP + H(+)</text>
        <dbReference type="Rhea" id="RHEA:13121"/>
        <dbReference type="ChEBI" id="CHEBI:15378"/>
        <dbReference type="ChEBI" id="CHEBI:30616"/>
        <dbReference type="ChEBI" id="CHEBI:36208"/>
        <dbReference type="ChEBI" id="CHEBI:145989"/>
        <dbReference type="ChEBI" id="CHEBI:456216"/>
        <dbReference type="EC" id="2.7.1.71"/>
    </reaction>
</comment>
<comment type="cofactor">
    <cofactor evidence="1">
        <name>Mg(2+)</name>
        <dbReference type="ChEBI" id="CHEBI:18420"/>
    </cofactor>
    <text evidence="1">Binds 1 Mg(2+) ion per subunit.</text>
</comment>
<comment type="pathway">
    <text evidence="1">Metabolic intermediate biosynthesis; chorismate biosynthesis; chorismate from D-erythrose 4-phosphate and phosphoenolpyruvate: step 5/7.</text>
</comment>
<comment type="subunit">
    <text evidence="1">Monomer.</text>
</comment>
<comment type="subcellular location">
    <subcellularLocation>
        <location evidence="1">Cytoplasm</location>
    </subcellularLocation>
</comment>
<comment type="similarity">
    <text evidence="1">Belongs to the shikimate kinase family.</text>
</comment>
<keyword id="KW-0028">Amino-acid biosynthesis</keyword>
<keyword id="KW-0057">Aromatic amino acid biosynthesis</keyword>
<keyword id="KW-0067">ATP-binding</keyword>
<keyword id="KW-0963">Cytoplasm</keyword>
<keyword id="KW-0418">Kinase</keyword>
<keyword id="KW-0460">Magnesium</keyword>
<keyword id="KW-0479">Metal-binding</keyword>
<keyword id="KW-0547">Nucleotide-binding</keyword>
<keyword id="KW-1185">Reference proteome</keyword>
<keyword id="KW-0808">Transferase</keyword>
<dbReference type="EC" id="2.7.1.71" evidence="1"/>
<dbReference type="EMBL" id="AE016826">
    <property type="protein sequence ID" value="AAO27187.1"/>
    <property type="molecule type" value="Genomic_DNA"/>
</dbReference>
<dbReference type="RefSeq" id="WP_011091588.1">
    <property type="nucleotide sequence ID" value="NC_004545.1"/>
</dbReference>
<dbReference type="SMR" id="P59488"/>
<dbReference type="STRING" id="224915.bbp_481"/>
<dbReference type="KEGG" id="bab:bbp_481"/>
<dbReference type="eggNOG" id="COG0703">
    <property type="taxonomic scope" value="Bacteria"/>
</dbReference>
<dbReference type="HOGENOM" id="CLU_057607_2_2_6"/>
<dbReference type="OrthoDB" id="9800332at2"/>
<dbReference type="UniPathway" id="UPA00053">
    <property type="reaction ID" value="UER00088"/>
</dbReference>
<dbReference type="Proteomes" id="UP000000601">
    <property type="component" value="Chromosome"/>
</dbReference>
<dbReference type="GO" id="GO:0005829">
    <property type="term" value="C:cytosol"/>
    <property type="evidence" value="ECO:0007669"/>
    <property type="project" value="TreeGrafter"/>
</dbReference>
<dbReference type="GO" id="GO:0005524">
    <property type="term" value="F:ATP binding"/>
    <property type="evidence" value="ECO:0007669"/>
    <property type="project" value="UniProtKB-UniRule"/>
</dbReference>
<dbReference type="GO" id="GO:0000287">
    <property type="term" value="F:magnesium ion binding"/>
    <property type="evidence" value="ECO:0007669"/>
    <property type="project" value="UniProtKB-UniRule"/>
</dbReference>
<dbReference type="GO" id="GO:0004765">
    <property type="term" value="F:shikimate kinase activity"/>
    <property type="evidence" value="ECO:0007669"/>
    <property type="project" value="UniProtKB-UniRule"/>
</dbReference>
<dbReference type="GO" id="GO:0008652">
    <property type="term" value="P:amino acid biosynthetic process"/>
    <property type="evidence" value="ECO:0007669"/>
    <property type="project" value="UniProtKB-KW"/>
</dbReference>
<dbReference type="GO" id="GO:0009073">
    <property type="term" value="P:aromatic amino acid family biosynthetic process"/>
    <property type="evidence" value="ECO:0007669"/>
    <property type="project" value="UniProtKB-KW"/>
</dbReference>
<dbReference type="GO" id="GO:0009423">
    <property type="term" value="P:chorismate biosynthetic process"/>
    <property type="evidence" value="ECO:0007669"/>
    <property type="project" value="UniProtKB-UniRule"/>
</dbReference>
<dbReference type="CDD" id="cd00464">
    <property type="entry name" value="SK"/>
    <property type="match status" value="1"/>
</dbReference>
<dbReference type="FunFam" id="3.40.50.300:FF:000099">
    <property type="entry name" value="Shikimate kinase 1"/>
    <property type="match status" value="1"/>
</dbReference>
<dbReference type="Gene3D" id="3.40.50.300">
    <property type="entry name" value="P-loop containing nucleotide triphosphate hydrolases"/>
    <property type="match status" value="1"/>
</dbReference>
<dbReference type="HAMAP" id="MF_00109">
    <property type="entry name" value="Shikimate_kinase"/>
    <property type="match status" value="1"/>
</dbReference>
<dbReference type="InterPro" id="IPR027417">
    <property type="entry name" value="P-loop_NTPase"/>
</dbReference>
<dbReference type="InterPro" id="IPR031322">
    <property type="entry name" value="Shikimate/glucono_kinase"/>
</dbReference>
<dbReference type="InterPro" id="IPR000623">
    <property type="entry name" value="Shikimate_kinase/TSH1"/>
</dbReference>
<dbReference type="InterPro" id="IPR023000">
    <property type="entry name" value="Shikimate_kinase_CS"/>
</dbReference>
<dbReference type="NCBIfam" id="NF003456">
    <property type="entry name" value="PRK05057.1"/>
    <property type="match status" value="1"/>
</dbReference>
<dbReference type="PANTHER" id="PTHR21087">
    <property type="entry name" value="SHIKIMATE KINASE"/>
    <property type="match status" value="1"/>
</dbReference>
<dbReference type="PANTHER" id="PTHR21087:SF16">
    <property type="entry name" value="SHIKIMATE KINASE 1, CHLOROPLASTIC"/>
    <property type="match status" value="1"/>
</dbReference>
<dbReference type="Pfam" id="PF01202">
    <property type="entry name" value="SKI"/>
    <property type="match status" value="1"/>
</dbReference>
<dbReference type="PRINTS" id="PR01100">
    <property type="entry name" value="SHIKIMTKNASE"/>
</dbReference>
<dbReference type="SUPFAM" id="SSF52540">
    <property type="entry name" value="P-loop containing nucleoside triphosphate hydrolases"/>
    <property type="match status" value="1"/>
</dbReference>
<dbReference type="PROSITE" id="PS01128">
    <property type="entry name" value="SHIKIMATE_KINASE"/>
    <property type="match status" value="1"/>
</dbReference>
<feature type="chain" id="PRO_0000192371" description="Shikimate kinase">
    <location>
        <begin position="1"/>
        <end position="174"/>
    </location>
</feature>
<feature type="binding site" evidence="1">
    <location>
        <begin position="14"/>
        <end position="19"/>
    </location>
    <ligand>
        <name>ATP</name>
        <dbReference type="ChEBI" id="CHEBI:30616"/>
    </ligand>
</feature>
<feature type="binding site" evidence="1">
    <location>
        <position position="18"/>
    </location>
    <ligand>
        <name>Mg(2+)</name>
        <dbReference type="ChEBI" id="CHEBI:18420"/>
    </ligand>
</feature>
<feature type="binding site" evidence="1">
    <location>
        <position position="36"/>
    </location>
    <ligand>
        <name>substrate</name>
    </ligand>
</feature>
<feature type="binding site" evidence="1">
    <location>
        <position position="60"/>
    </location>
    <ligand>
        <name>substrate</name>
    </ligand>
</feature>
<feature type="binding site" evidence="1">
    <location>
        <position position="82"/>
    </location>
    <ligand>
        <name>substrate</name>
    </ligand>
</feature>
<feature type="binding site" evidence="1">
    <location>
        <position position="120"/>
    </location>
    <ligand>
        <name>ATP</name>
        <dbReference type="ChEBI" id="CHEBI:30616"/>
    </ligand>
</feature>
<feature type="binding site" evidence="1">
    <location>
        <position position="141"/>
    </location>
    <ligand>
        <name>substrate</name>
    </ligand>
</feature>
<feature type="binding site" evidence="1">
    <location>
        <position position="158"/>
    </location>
    <ligand>
        <name>ATP</name>
        <dbReference type="ChEBI" id="CHEBI:30616"/>
    </ligand>
</feature>
<protein>
    <recommendedName>
        <fullName evidence="1">Shikimate kinase</fullName>
        <shortName evidence="1">SK</shortName>
        <ecNumber evidence="1">2.7.1.71</ecNumber>
    </recommendedName>
</protein>
<gene>
    <name evidence="1" type="primary">aroK</name>
    <name type="ordered locus">bbp_481</name>
</gene>
<organism>
    <name type="scientific">Buchnera aphidicola subsp. Baizongia pistaciae (strain Bp)</name>
    <dbReference type="NCBI Taxonomy" id="224915"/>
    <lineage>
        <taxon>Bacteria</taxon>
        <taxon>Pseudomonadati</taxon>
        <taxon>Pseudomonadota</taxon>
        <taxon>Gammaproteobacteria</taxon>
        <taxon>Enterobacterales</taxon>
        <taxon>Erwiniaceae</taxon>
        <taxon>Buchnera</taxon>
    </lineage>
</organism>
<proteinExistence type="inferred from homology"/>
<reference key="1">
    <citation type="journal article" date="2003" name="Proc. Natl. Acad. Sci. U.S.A.">
        <title>Reductive genome evolution in Buchnera aphidicola.</title>
        <authorList>
            <person name="van Ham R.C.H.J."/>
            <person name="Kamerbeek J."/>
            <person name="Palacios C."/>
            <person name="Rausell C."/>
            <person name="Abascal F."/>
            <person name="Bastolla U."/>
            <person name="Fernandez J.M."/>
            <person name="Jimenez L."/>
            <person name="Postigo M."/>
            <person name="Silva F.J."/>
            <person name="Tamames J."/>
            <person name="Viguera E."/>
            <person name="Latorre A."/>
            <person name="Valencia A."/>
            <person name="Moran F."/>
            <person name="Moya A."/>
        </authorList>
    </citation>
    <scope>NUCLEOTIDE SEQUENCE [LARGE SCALE GENOMIC DNA]</scope>
    <source>
        <strain>Bp</strain>
    </source>
</reference>
<sequence length="174" mass="19984">MTEKRNIFLIGPMGAGKSTIGRHLAQQLSMEFYDSDQEIEKRTGVDVSWIFDIEGELGFRKREQKIISEIIDKRGIVLSTGGGSILSREIRNKLSSRGVVIYLETSVEKQLVRTKKNKQRPLLQVDNTSIQTVLEELAFHRNPLYQSIADITIRMNDRSIKAIVFYIIRLLNNF</sequence>
<evidence type="ECO:0000255" key="1">
    <source>
        <dbReference type="HAMAP-Rule" id="MF_00109"/>
    </source>
</evidence>
<name>AROK_BUCBP</name>